<reference key="1">
    <citation type="journal article" date="2012" name="PLoS Pathog.">
        <title>Comparative pathogenomics reveals horizontally acquired novel virulence genes in fungi infecting cereal hosts.</title>
        <authorList>
            <person name="Gardiner D.M."/>
            <person name="McDonald M.C."/>
            <person name="Covarelli L."/>
            <person name="Solomon P.S."/>
            <person name="Rusu A.G."/>
            <person name="Marshall M."/>
            <person name="Kazan K."/>
            <person name="Chakraborty S."/>
            <person name="McDonald B.A."/>
            <person name="Manners J.M."/>
        </authorList>
    </citation>
    <scope>NUCLEOTIDE SEQUENCE [LARGE SCALE GENOMIC DNA]</scope>
    <source>
        <strain>CS3096</strain>
    </source>
</reference>
<reference key="2">
    <citation type="journal article" date="2018" name="Mol. Plant Pathol.">
        <title>The cereal pathogen Fusarium pseudograminearum produces a new class of active cytokinins during infection.</title>
        <authorList>
            <person name="Soerensen J.L."/>
            <person name="Benfield A.H."/>
            <person name="Wollenberg R.D."/>
            <person name="Westphal K."/>
            <person name="Wimmer R."/>
            <person name="Nielsen M.R."/>
            <person name="Nielsen K.F."/>
            <person name="Carere J."/>
            <person name="Covarelli L."/>
            <person name="Beccari G."/>
            <person name="Powell J."/>
            <person name="Yamashino T."/>
            <person name="Kogler H."/>
            <person name="Sondergaard T.E."/>
            <person name="Gardiner D.M."/>
        </authorList>
    </citation>
    <scope>FUNCTION</scope>
    <scope>DISRUPTION PHENOTYPE</scope>
    <scope>CATALYTIC ACTIVITY</scope>
    <scope>INDUCTION</scope>
    <scope>PATHWAY</scope>
    <source>
        <strain>CS3096</strain>
    </source>
</reference>
<proteinExistence type="evidence at protein level"/>
<name>FCK1_FUSPC</name>
<organism>
    <name type="scientific">Fusarium pseudograminearum (strain CS3096)</name>
    <name type="common">Wheat and barley crown-rot fungus</name>
    <dbReference type="NCBI Taxonomy" id="1028729"/>
    <lineage>
        <taxon>Eukaryota</taxon>
        <taxon>Fungi</taxon>
        <taxon>Dikarya</taxon>
        <taxon>Ascomycota</taxon>
        <taxon>Pezizomycotina</taxon>
        <taxon>Sordariomycetes</taxon>
        <taxon>Hypocreomycetidae</taxon>
        <taxon>Hypocreales</taxon>
        <taxon>Nectriaceae</taxon>
        <taxon>Fusarium</taxon>
    </lineage>
</organism>
<protein>
    <recommendedName>
        <fullName evidence="3">Bifunctional cytokinin biosynthesis protein</fullName>
    </recommendedName>
    <alternativeName>
        <fullName evidence="3">IPT-LOG</fullName>
    </alternativeName>
    <domain>
        <recommendedName>
            <fullName evidence="3">Adenylate isopentenyltransferase</fullName>
            <ecNumber evidence="2">2.5.1.27</ecNumber>
        </recommendedName>
    </domain>
    <domain>
        <recommendedName>
            <fullName evidence="3">Cytokinin riboside 5'-monophosphate phosphoribohydrolase</fullName>
            <ecNumber evidence="2">3.2.2.n1</ecNumber>
        </recommendedName>
    </domain>
</protein>
<accession>K3VH30</accession>
<sequence>MESTNRFMIGVFGPTGVGKTKLGVSIAKSVHGQVISVDSLQCYSPGGIVTAKPTPEEMDGIEHHMIGYLEAEEEPTNFVAEAVERLEKLCDHGAIPVVVGGSTSLTLPLLRGALNRGWRMAAITLLPHQSTYLGNIESRVDDMLEAGLLEELSGLKSLEDRNLNGKPNFHKGIWKTIGYQELYPYLEAQRSDGHCDELLKSGLASMKENTFQYGNTQLEWIRQALSPFLHAEKIANMSLTVVDKTSWTRGVEKPAIRMASDFCYASTSISFHPINEPKPRVICIFGGSSSGNDPAHMEAAKSLGRVCHENSIKLVYGGGTTGVMGAIASTLVELSGPNAVHGIIPEALLKYEAKESGRHAQDSAFARYGRRTVVKDMHTRKRLMIQEVIDGGDGSGFVGLSGGYGTLEELFEVITWHQLGIHDRGVCLLNMDGFFDGLVNWLGNVVKKGFIGLQDAAILSIASTAEGVVKCLDQKPGFSRKGELEWV</sequence>
<gene>
    <name evidence="3" type="primary">FCK1</name>
    <name type="ORF">FPSE_06372</name>
</gene>
<dbReference type="EC" id="2.5.1.27" evidence="2"/>
<dbReference type="EC" id="3.2.2.n1" evidence="2"/>
<dbReference type="EMBL" id="AFNW01000149">
    <property type="protein sequence ID" value="EKJ73454.1"/>
    <property type="molecule type" value="Genomic_DNA"/>
</dbReference>
<dbReference type="RefSeq" id="XP_009257765.1">
    <property type="nucleotide sequence ID" value="XM_009259490.1"/>
</dbReference>
<dbReference type="SMR" id="K3VH30"/>
<dbReference type="EnsemblFungi" id="EKJ73454">
    <property type="protein sequence ID" value="EKJ73454"/>
    <property type="gene ID" value="FPSE_06372"/>
</dbReference>
<dbReference type="GeneID" id="20364990"/>
<dbReference type="KEGG" id="fpu:FPSE_06372"/>
<dbReference type="eggNOG" id="KOG1384">
    <property type="taxonomic scope" value="Eukaryota"/>
</dbReference>
<dbReference type="HOGENOM" id="CLU_047145_0_0_1"/>
<dbReference type="OrthoDB" id="414463at2759"/>
<dbReference type="Proteomes" id="UP000007978">
    <property type="component" value="Chromosome 3"/>
</dbReference>
<dbReference type="GO" id="GO:0005829">
    <property type="term" value="C:cytosol"/>
    <property type="evidence" value="ECO:0007669"/>
    <property type="project" value="TreeGrafter"/>
</dbReference>
<dbReference type="GO" id="GO:0009824">
    <property type="term" value="F:AMP dimethylallyltransferase activity"/>
    <property type="evidence" value="ECO:0007669"/>
    <property type="project" value="UniProtKB-EC"/>
</dbReference>
<dbReference type="GO" id="GO:0102682">
    <property type="term" value="F:cytokinin riboside 5'-monophosphate phosphoribohydrolase activity"/>
    <property type="evidence" value="ECO:0007669"/>
    <property type="project" value="RHEA"/>
</dbReference>
<dbReference type="GO" id="GO:0009691">
    <property type="term" value="P:cytokinin biosynthetic process"/>
    <property type="evidence" value="ECO:0007669"/>
    <property type="project" value="UniProtKB-KW"/>
</dbReference>
<dbReference type="Gene3D" id="3.40.50.450">
    <property type="match status" value="1"/>
</dbReference>
<dbReference type="Gene3D" id="3.40.50.300">
    <property type="entry name" value="P-loop containing nucleotide triphosphate hydrolases"/>
    <property type="match status" value="1"/>
</dbReference>
<dbReference type="InterPro" id="IPR005269">
    <property type="entry name" value="LOG"/>
</dbReference>
<dbReference type="InterPro" id="IPR031100">
    <property type="entry name" value="LOG_fam"/>
</dbReference>
<dbReference type="InterPro" id="IPR027417">
    <property type="entry name" value="P-loop_NTPase"/>
</dbReference>
<dbReference type="NCBIfam" id="TIGR00730">
    <property type="entry name" value="Rossman fold protein, TIGR00730 family"/>
    <property type="match status" value="1"/>
</dbReference>
<dbReference type="PANTHER" id="PTHR31223">
    <property type="entry name" value="LOG FAMILY PROTEIN YJL055W"/>
    <property type="match status" value="1"/>
</dbReference>
<dbReference type="PANTHER" id="PTHR31223:SF70">
    <property type="entry name" value="LOG FAMILY PROTEIN YJL055W"/>
    <property type="match status" value="1"/>
</dbReference>
<dbReference type="Pfam" id="PF01715">
    <property type="entry name" value="IPPT"/>
    <property type="match status" value="2"/>
</dbReference>
<dbReference type="Pfam" id="PF03641">
    <property type="entry name" value="Lysine_decarbox"/>
    <property type="match status" value="1"/>
</dbReference>
<dbReference type="SUPFAM" id="SSF102405">
    <property type="entry name" value="MCP/YpsA-like"/>
    <property type="match status" value="1"/>
</dbReference>
<dbReference type="SUPFAM" id="SSF52540">
    <property type="entry name" value="P-loop containing nucleoside triphosphate hydrolases"/>
    <property type="match status" value="1"/>
</dbReference>
<keyword id="KW-0203">Cytokinin biosynthesis</keyword>
<keyword id="KW-0378">Hydrolase</keyword>
<keyword id="KW-0511">Multifunctional enzyme</keyword>
<keyword id="KW-1185">Reference proteome</keyword>
<keyword id="KW-0808">Transferase</keyword>
<feature type="chain" id="PRO_0000442150" description="Bifunctional cytokinin biosynthesis protein">
    <location>
        <begin position="1"/>
        <end position="487"/>
    </location>
</feature>
<feature type="region of interest" description="Adenylate isopentenyltransferase" evidence="3">
    <location>
        <begin position="1"/>
        <end position="266"/>
    </location>
</feature>
<feature type="region of interest" description="Cytokinin riboside 5'-monophosphate phosphoribohydrolase" evidence="3">
    <location>
        <begin position="267"/>
        <end position="487"/>
    </location>
</feature>
<feature type="binding site" evidence="1">
    <location>
        <position position="352"/>
    </location>
    <ligand>
        <name>substrate</name>
    </ligand>
</feature>
<feature type="binding site" evidence="1">
    <location>
        <begin position="380"/>
        <end position="381"/>
    </location>
    <ligand>
        <name>substrate</name>
    </ligand>
</feature>
<feature type="binding site" evidence="1">
    <location>
        <begin position="403"/>
        <end position="409"/>
    </location>
    <ligand>
        <name>substrate</name>
    </ligand>
</feature>
<feature type="binding site" evidence="1">
    <location>
        <position position="415"/>
    </location>
    <ligand>
        <name>substrate</name>
    </ligand>
</feature>
<comment type="function">
    <text>Bifunctional cytokinin synthesis protein; part of the gene cluster that mediates the biosynthesis of cytokinins such as fusatin, fusatinic acids or 8-oxofusatin, known for their growth promoting and anti-senescence activities toward host plants (PubMed:28802024). FCK1 is a bifunctional enzyme that performs the first steps in the biosynthesis of Fusarium cytokinins (PubMed:28802024). It first condenses adenosine monophosphate (AMP) with dimethylallyl diphosphate (DMAPP) to yield isoprenyl adenosine monophosphate (PubMed:28802024). It then catalyzes the removal of the phosphoribose to produce isopentenylaldehyde (PubMed:28802024). The cytochrome P450 monooxygenase then converts isopentenylaldehyde to trans-zeatin (PubMed:28802024). A condensation step converts trans-zeatin to fusatin which is further modified to produce fusatinic acid (PubMed:28802024). The mechanism for oxidation of fusatin to fusatinic acid remains unknown (PubMed:28802024). 8-oxofusatin could be produced through several pathways, via direct oxygenation of fusatin, or via the 8-oxo-pentenyladenine intermediate which itself must arise from either the prenylation of 8-oxo-AMP by FCK1 and/or oxygenation of isopentenylaldehyde (PubMed:28802024). Both the FCK3 and FCK4 enzymes act downstream of the identified cytokinins to produce yet unidentified compounds (PubMed:28802024).</text>
</comment>
<comment type="catalytic activity">
    <reaction evidence="2">
        <text>dimethylallyl diphosphate + AMP = N(6)-(dimethylallyl)adenosine 5'-phosphate + diphosphate</text>
        <dbReference type="Rhea" id="RHEA:15285"/>
        <dbReference type="ChEBI" id="CHEBI:33019"/>
        <dbReference type="ChEBI" id="CHEBI:57526"/>
        <dbReference type="ChEBI" id="CHEBI:57623"/>
        <dbReference type="ChEBI" id="CHEBI:456215"/>
        <dbReference type="EC" id="2.5.1.27"/>
    </reaction>
</comment>
<comment type="catalytic activity">
    <reaction evidence="2">
        <text>N(6)-(dimethylallyl)adenosine 5'-phosphate + H2O = N(6)-dimethylallyladenine + D-ribose 5-phosphate</text>
        <dbReference type="Rhea" id="RHEA:48560"/>
        <dbReference type="ChEBI" id="CHEBI:15377"/>
        <dbReference type="ChEBI" id="CHEBI:17660"/>
        <dbReference type="ChEBI" id="CHEBI:57526"/>
        <dbReference type="ChEBI" id="CHEBI:78346"/>
        <dbReference type="EC" id="3.2.2.n1"/>
    </reaction>
</comment>
<comment type="catalytic activity">
    <reaction evidence="2">
        <text>9-ribosyl-trans-zeatin 5'-phosphate + H2O = trans-zeatin + D-ribose 5-phosphate</text>
        <dbReference type="Rhea" id="RHEA:48564"/>
        <dbReference type="ChEBI" id="CHEBI:15377"/>
        <dbReference type="ChEBI" id="CHEBI:16522"/>
        <dbReference type="ChEBI" id="CHEBI:78346"/>
        <dbReference type="ChEBI" id="CHEBI:87947"/>
        <dbReference type="EC" id="3.2.2.n1"/>
    </reaction>
</comment>
<comment type="pathway">
    <text evidence="2">Secondary metabolite biosynthesis.</text>
</comment>
<comment type="induction">
    <text evidence="2">Expressed during infection of barley and Brachypodium (PubMed:28802024).</text>
</comment>
<comment type="disruption phenotype">
    <text evidence="2">Impairs the production of cytokinins, isopentenylaldehyde, trans-zeatin and cis-zeatin (PubMed:28802024).</text>
</comment>
<comment type="similarity">
    <text evidence="4">In the N-terminal section; belongs to the IPP transferase family.</text>
</comment>
<comment type="similarity">
    <text evidence="4">In the C-terminal section; belongs to the LOG family.</text>
</comment>
<evidence type="ECO:0000250" key="1">
    <source>
        <dbReference type="UniProtKB" id="B2HS63"/>
    </source>
</evidence>
<evidence type="ECO:0000269" key="2">
    <source>
    </source>
</evidence>
<evidence type="ECO:0000303" key="3">
    <source>
    </source>
</evidence>
<evidence type="ECO:0000305" key="4"/>